<keyword id="KW-0539">Nucleus</keyword>
<keyword id="KW-1185">Reference proteome</keyword>
<keyword id="KW-0690">Ribosome biogenesis</keyword>
<keyword id="KW-0698">rRNA processing</keyword>
<sequence>MGLAAPRKRTKISHDPNNTNWARSTSGFGHKILSSQGWTPGSFLGARDAAHADMFTAASAGHIRVVVKDDTLGLGARAGRDPNEPTGLDAFKGLLGRLNGKSDAELAADQRKADDIKLARYAAFKWQAVRFVSGGLLAQEKLERLPERESVQQSRAAVETSDSNRNSENDASKVSKKKKKKTSSDSSSDEQSSRSEKRREKKEKKDKKEKKEKKDKKDKKRKRAEEDNDASQKSASETPAPEKESTGLESDSTSVSVVKASRERRPLGRQIVRGRHIAQKKRALMDDKSLNEIFMVKA</sequence>
<proteinExistence type="inferred from homology"/>
<organism>
    <name type="scientific">Aspergillus terreus (strain NIH 2624 / FGSC A1156)</name>
    <dbReference type="NCBI Taxonomy" id="341663"/>
    <lineage>
        <taxon>Eukaryota</taxon>
        <taxon>Fungi</taxon>
        <taxon>Dikarya</taxon>
        <taxon>Ascomycota</taxon>
        <taxon>Pezizomycotina</taxon>
        <taxon>Eurotiomycetes</taxon>
        <taxon>Eurotiomycetidae</taxon>
        <taxon>Eurotiales</taxon>
        <taxon>Aspergillaceae</taxon>
        <taxon>Aspergillus</taxon>
        <taxon>Aspergillus subgen. Circumdati</taxon>
    </lineage>
</organism>
<name>PXR1_ASPTN</name>
<gene>
    <name type="primary">pxr1</name>
    <name type="ORF">ATEG_02782</name>
</gene>
<comment type="function">
    <text evidence="1">Involved in rRNA-processing at A0, A1 and A2 sites and negatively regulates telomerase.</text>
</comment>
<comment type="subcellular location">
    <subcellularLocation>
        <location evidence="1">Nucleus</location>
        <location evidence="1">Nucleolus</location>
    </subcellularLocation>
</comment>
<comment type="similarity">
    <text evidence="4">Belongs to the PINX1 family.</text>
</comment>
<comment type="sequence caution" evidence="4">
    <conflict type="erroneous gene model prediction">
        <sequence resource="EMBL-CDS" id="EAU36056"/>
    </conflict>
</comment>
<protein>
    <recommendedName>
        <fullName>Protein pxr1</fullName>
    </recommendedName>
    <alternativeName>
        <fullName>PinX1-related protein 1</fullName>
    </alternativeName>
</protein>
<feature type="chain" id="PRO_0000324882" description="Protein pxr1">
    <location>
        <begin position="1"/>
        <end position="298"/>
    </location>
</feature>
<feature type="domain" description="G-patch" evidence="2">
    <location>
        <begin position="25"/>
        <end position="79"/>
    </location>
</feature>
<feature type="region of interest" description="Disordered" evidence="3">
    <location>
        <begin position="1"/>
        <end position="23"/>
    </location>
</feature>
<feature type="region of interest" description="Disordered" evidence="3">
    <location>
        <begin position="145"/>
        <end position="274"/>
    </location>
</feature>
<feature type="compositionally biased region" description="Basic residues" evidence="3">
    <location>
        <begin position="1"/>
        <end position="11"/>
    </location>
</feature>
<feature type="compositionally biased region" description="Polar residues" evidence="3">
    <location>
        <begin position="151"/>
        <end position="164"/>
    </location>
</feature>
<feature type="compositionally biased region" description="Basic residues" evidence="3">
    <location>
        <begin position="199"/>
        <end position="222"/>
    </location>
</feature>
<feature type="compositionally biased region" description="Polar residues" evidence="3">
    <location>
        <begin position="247"/>
        <end position="256"/>
    </location>
</feature>
<reference key="1">
    <citation type="submission" date="2005-09" db="EMBL/GenBank/DDBJ databases">
        <title>Annotation of the Aspergillus terreus NIH2624 genome.</title>
        <authorList>
            <person name="Birren B.W."/>
            <person name="Lander E.S."/>
            <person name="Galagan J.E."/>
            <person name="Nusbaum C."/>
            <person name="Devon K."/>
            <person name="Henn M."/>
            <person name="Ma L.-J."/>
            <person name="Jaffe D.B."/>
            <person name="Butler J."/>
            <person name="Alvarez P."/>
            <person name="Gnerre S."/>
            <person name="Grabherr M."/>
            <person name="Kleber M."/>
            <person name="Mauceli E.W."/>
            <person name="Brockman W."/>
            <person name="Rounsley S."/>
            <person name="Young S.K."/>
            <person name="LaButti K."/>
            <person name="Pushparaj V."/>
            <person name="DeCaprio D."/>
            <person name="Crawford M."/>
            <person name="Koehrsen M."/>
            <person name="Engels R."/>
            <person name="Montgomery P."/>
            <person name="Pearson M."/>
            <person name="Howarth C."/>
            <person name="Larson L."/>
            <person name="Luoma S."/>
            <person name="White J."/>
            <person name="Alvarado L."/>
            <person name="Kodira C.D."/>
            <person name="Zeng Q."/>
            <person name="Oleary S."/>
            <person name="Yandava C."/>
            <person name="Denning D.W."/>
            <person name="Nierman W.C."/>
            <person name="Milne T."/>
            <person name="Madden K."/>
        </authorList>
    </citation>
    <scope>NUCLEOTIDE SEQUENCE [LARGE SCALE GENOMIC DNA]</scope>
    <source>
        <strain>NIH 2624 / FGSC A1156</strain>
    </source>
</reference>
<dbReference type="EMBL" id="CH476597">
    <property type="protein sequence ID" value="EAU36056.1"/>
    <property type="status" value="ALT_SEQ"/>
    <property type="molecule type" value="Genomic_DNA"/>
</dbReference>
<dbReference type="RefSeq" id="XP_001211960.1">
    <property type="nucleotide sequence ID" value="XM_001211960.1"/>
</dbReference>
<dbReference type="STRING" id="341663.Q0CU52"/>
<dbReference type="EnsemblFungi" id="EAU36056">
    <property type="protein sequence ID" value="EAU36056"/>
    <property type="gene ID" value="ATEG_02782"/>
</dbReference>
<dbReference type="GeneID" id="4317344"/>
<dbReference type="OrthoDB" id="29523at2759"/>
<dbReference type="Proteomes" id="UP000007963">
    <property type="component" value="Unassembled WGS sequence"/>
</dbReference>
<dbReference type="GO" id="GO:0005730">
    <property type="term" value="C:nucleolus"/>
    <property type="evidence" value="ECO:0007669"/>
    <property type="project" value="UniProtKB-SubCell"/>
</dbReference>
<dbReference type="GO" id="GO:0003676">
    <property type="term" value="F:nucleic acid binding"/>
    <property type="evidence" value="ECO:0007669"/>
    <property type="project" value="InterPro"/>
</dbReference>
<dbReference type="GO" id="GO:0006364">
    <property type="term" value="P:rRNA processing"/>
    <property type="evidence" value="ECO:0007669"/>
    <property type="project" value="UniProtKB-KW"/>
</dbReference>
<dbReference type="InterPro" id="IPR000467">
    <property type="entry name" value="G_patch_dom"/>
</dbReference>
<dbReference type="InterPro" id="IPR050656">
    <property type="entry name" value="PINX1"/>
</dbReference>
<dbReference type="PANTHER" id="PTHR23149">
    <property type="entry name" value="G PATCH DOMAIN CONTAINING PROTEIN"/>
    <property type="match status" value="1"/>
</dbReference>
<dbReference type="PANTHER" id="PTHR23149:SF31">
    <property type="entry name" value="PROTEIN PXR1"/>
    <property type="match status" value="1"/>
</dbReference>
<dbReference type="PROSITE" id="PS50174">
    <property type="entry name" value="G_PATCH"/>
    <property type="match status" value="1"/>
</dbReference>
<accession>Q0CU52</accession>
<evidence type="ECO:0000250" key="1"/>
<evidence type="ECO:0000255" key="2">
    <source>
        <dbReference type="PROSITE-ProRule" id="PRU00092"/>
    </source>
</evidence>
<evidence type="ECO:0000256" key="3">
    <source>
        <dbReference type="SAM" id="MobiDB-lite"/>
    </source>
</evidence>
<evidence type="ECO:0000305" key="4"/>